<accession>Q0HLP8</accession>
<feature type="chain" id="PRO_1000060173" description="Na(+)-translocating NADH-quinone reductase subunit D">
    <location>
        <begin position="1"/>
        <end position="210"/>
    </location>
</feature>
<feature type="transmembrane region" description="Helical" evidence="1">
    <location>
        <begin position="14"/>
        <end position="34"/>
    </location>
</feature>
<feature type="transmembrane region" description="Helical" evidence="1">
    <location>
        <begin position="42"/>
        <end position="62"/>
    </location>
</feature>
<feature type="transmembrane region" description="Helical" evidence="1">
    <location>
        <begin position="72"/>
        <end position="92"/>
    </location>
</feature>
<feature type="transmembrane region" description="Helical" evidence="1">
    <location>
        <begin position="103"/>
        <end position="123"/>
    </location>
</feature>
<feature type="transmembrane region" description="Helical" evidence="1">
    <location>
        <begin position="131"/>
        <end position="151"/>
    </location>
</feature>
<feature type="transmembrane region" description="Helical" evidence="1">
    <location>
        <begin position="178"/>
        <end position="198"/>
    </location>
</feature>
<proteinExistence type="inferred from homology"/>
<dbReference type="EC" id="7.2.1.1" evidence="1"/>
<dbReference type="EMBL" id="CP000446">
    <property type="protein sequence ID" value="ABI38019.1"/>
    <property type="molecule type" value="Genomic_DNA"/>
</dbReference>
<dbReference type="RefSeq" id="WP_011621733.1">
    <property type="nucleotide sequence ID" value="NC_008321.1"/>
</dbReference>
<dbReference type="SMR" id="Q0HLP8"/>
<dbReference type="KEGG" id="she:Shewmr4_0939"/>
<dbReference type="HOGENOM" id="CLU_046659_1_1_6"/>
<dbReference type="GO" id="GO:0005886">
    <property type="term" value="C:plasma membrane"/>
    <property type="evidence" value="ECO:0007669"/>
    <property type="project" value="UniProtKB-SubCell"/>
</dbReference>
<dbReference type="GO" id="GO:0016655">
    <property type="term" value="F:oxidoreductase activity, acting on NAD(P)H, quinone or similar compound as acceptor"/>
    <property type="evidence" value="ECO:0007669"/>
    <property type="project" value="UniProtKB-UniRule"/>
</dbReference>
<dbReference type="GO" id="GO:0006814">
    <property type="term" value="P:sodium ion transport"/>
    <property type="evidence" value="ECO:0007669"/>
    <property type="project" value="UniProtKB-UniRule"/>
</dbReference>
<dbReference type="HAMAP" id="MF_00428">
    <property type="entry name" value="NqrD"/>
    <property type="match status" value="1"/>
</dbReference>
<dbReference type="InterPro" id="IPR011292">
    <property type="entry name" value="NqrD"/>
</dbReference>
<dbReference type="InterPro" id="IPR003667">
    <property type="entry name" value="NqrDE/RnfAE"/>
</dbReference>
<dbReference type="NCBIfam" id="TIGR01939">
    <property type="entry name" value="nqrD"/>
    <property type="match status" value="1"/>
</dbReference>
<dbReference type="NCBIfam" id="NF006777">
    <property type="entry name" value="PRK09292.1"/>
    <property type="match status" value="1"/>
</dbReference>
<dbReference type="NCBIfam" id="NF009070">
    <property type="entry name" value="PRK12405.1"/>
    <property type="match status" value="1"/>
</dbReference>
<dbReference type="PANTHER" id="PTHR30586">
    <property type="entry name" value="ELECTRON TRANSPORT COMPLEX PROTEIN RNFE"/>
    <property type="match status" value="1"/>
</dbReference>
<dbReference type="PANTHER" id="PTHR30586:SF1">
    <property type="entry name" value="NA(+)-TRANSLOCATING NADH-QUINONE REDUCTASE SUBUNIT D"/>
    <property type="match status" value="1"/>
</dbReference>
<dbReference type="Pfam" id="PF02508">
    <property type="entry name" value="Rnf-Nqr"/>
    <property type="match status" value="1"/>
</dbReference>
<dbReference type="PIRSF" id="PIRSF006102">
    <property type="entry name" value="NQR_DE"/>
    <property type="match status" value="1"/>
</dbReference>
<evidence type="ECO:0000255" key="1">
    <source>
        <dbReference type="HAMAP-Rule" id="MF_00428"/>
    </source>
</evidence>
<keyword id="KW-0997">Cell inner membrane</keyword>
<keyword id="KW-1003">Cell membrane</keyword>
<keyword id="KW-0406">Ion transport</keyword>
<keyword id="KW-0472">Membrane</keyword>
<keyword id="KW-0520">NAD</keyword>
<keyword id="KW-0915">Sodium</keyword>
<keyword id="KW-0739">Sodium transport</keyword>
<keyword id="KW-1278">Translocase</keyword>
<keyword id="KW-0812">Transmembrane</keyword>
<keyword id="KW-1133">Transmembrane helix</keyword>
<keyword id="KW-0813">Transport</keyword>
<keyword id="KW-0830">Ubiquinone</keyword>
<sequence>MSDAKELKQVLTGPIVNNNPIALQVLGVCSALAVTSKLETALVMALALTAVTAFSNLFISMIRNHIPSSVRIIVQMTIIASLVIVVDQLLQAYAYQISKQLSVFVGLIITNCIVMGRAEAYAMKTPPMMSFMDGIGNGLGYGAILLAVGFVRELFGNGSLFGVQILHKISEGGWYQPNGLLLLPPSAFFLIGILIWIIRTYKPEQVEAKG</sequence>
<gene>
    <name evidence="1" type="primary">nqrD</name>
    <name type="ordered locus">Shewmr4_0939</name>
</gene>
<comment type="function">
    <text evidence="1">NQR complex catalyzes the reduction of ubiquinone-1 to ubiquinol by two successive reactions, coupled with the transport of Na(+) ions from the cytoplasm to the periplasm. NqrA to NqrE are probably involved in the second step, the conversion of ubisemiquinone to ubiquinol.</text>
</comment>
<comment type="catalytic activity">
    <reaction evidence="1">
        <text>a ubiquinone + n Na(+)(in) + NADH + H(+) = a ubiquinol + n Na(+)(out) + NAD(+)</text>
        <dbReference type="Rhea" id="RHEA:47748"/>
        <dbReference type="Rhea" id="RHEA-COMP:9565"/>
        <dbReference type="Rhea" id="RHEA-COMP:9566"/>
        <dbReference type="ChEBI" id="CHEBI:15378"/>
        <dbReference type="ChEBI" id="CHEBI:16389"/>
        <dbReference type="ChEBI" id="CHEBI:17976"/>
        <dbReference type="ChEBI" id="CHEBI:29101"/>
        <dbReference type="ChEBI" id="CHEBI:57540"/>
        <dbReference type="ChEBI" id="CHEBI:57945"/>
        <dbReference type="EC" id="7.2.1.1"/>
    </reaction>
</comment>
<comment type="subunit">
    <text evidence="1">Composed of six subunits; NqrA, NqrB, NqrC, NqrD, NqrE and NqrF.</text>
</comment>
<comment type="subcellular location">
    <subcellularLocation>
        <location evidence="1">Cell inner membrane</location>
        <topology evidence="1">Multi-pass membrane protein</topology>
    </subcellularLocation>
</comment>
<comment type="similarity">
    <text evidence="1">Belongs to the NqrDE/RnfAE family.</text>
</comment>
<protein>
    <recommendedName>
        <fullName evidence="1">Na(+)-translocating NADH-quinone reductase subunit D</fullName>
        <shortName evidence="1">Na(+)-NQR subunit D</shortName>
        <shortName evidence="1">Na(+)-translocating NQR subunit D</shortName>
        <ecNumber evidence="1">7.2.1.1</ecNumber>
    </recommendedName>
    <alternativeName>
        <fullName evidence="1">NQR complex subunit D</fullName>
    </alternativeName>
    <alternativeName>
        <fullName evidence="1">NQR-1 subunit D</fullName>
    </alternativeName>
</protein>
<name>NQRD_SHESM</name>
<reference key="1">
    <citation type="submission" date="2006-08" db="EMBL/GenBank/DDBJ databases">
        <title>Complete sequence of Shewanella sp. MR-4.</title>
        <authorList>
            <consortium name="US DOE Joint Genome Institute"/>
            <person name="Copeland A."/>
            <person name="Lucas S."/>
            <person name="Lapidus A."/>
            <person name="Barry K."/>
            <person name="Detter J.C."/>
            <person name="Glavina del Rio T."/>
            <person name="Hammon N."/>
            <person name="Israni S."/>
            <person name="Dalin E."/>
            <person name="Tice H."/>
            <person name="Pitluck S."/>
            <person name="Kiss H."/>
            <person name="Brettin T."/>
            <person name="Bruce D."/>
            <person name="Han C."/>
            <person name="Tapia R."/>
            <person name="Gilna P."/>
            <person name="Schmutz J."/>
            <person name="Larimer F."/>
            <person name="Land M."/>
            <person name="Hauser L."/>
            <person name="Kyrpides N."/>
            <person name="Mikhailova N."/>
            <person name="Nealson K."/>
            <person name="Konstantinidis K."/>
            <person name="Klappenbach J."/>
            <person name="Tiedje J."/>
            <person name="Richardson P."/>
        </authorList>
    </citation>
    <scope>NUCLEOTIDE SEQUENCE [LARGE SCALE GENOMIC DNA]</scope>
    <source>
        <strain>MR-4</strain>
    </source>
</reference>
<organism>
    <name type="scientific">Shewanella sp. (strain MR-4)</name>
    <dbReference type="NCBI Taxonomy" id="60480"/>
    <lineage>
        <taxon>Bacteria</taxon>
        <taxon>Pseudomonadati</taxon>
        <taxon>Pseudomonadota</taxon>
        <taxon>Gammaproteobacteria</taxon>
        <taxon>Alteromonadales</taxon>
        <taxon>Shewanellaceae</taxon>
        <taxon>Shewanella</taxon>
    </lineage>
</organism>